<accession>Q09739</accession>
<reference key="1">
    <citation type="journal article" date="2004" name="Nucleic Acids Res.">
        <title>Mcp7, a meiosis-specific coiled-coil protein of fission yeast, associates with Meu13 and is required for meiotic recombination.</title>
        <authorList>
            <person name="Saito T.T."/>
            <person name="Tougan T."/>
            <person name="Kasama T."/>
            <person name="Okuzaki D."/>
            <person name="Nojima H."/>
        </authorList>
    </citation>
    <scope>NUCLEOTIDE SEQUENCE [GENOMIC DNA]</scope>
    <scope>FUNCTION</scope>
    <scope>INTERACTION WITH MEU13</scope>
</reference>
<reference key="2">
    <citation type="journal article" date="2002" name="Nature">
        <title>The genome sequence of Schizosaccharomyces pombe.</title>
        <authorList>
            <person name="Wood V."/>
            <person name="Gwilliam R."/>
            <person name="Rajandream M.A."/>
            <person name="Lyne M.H."/>
            <person name="Lyne R."/>
            <person name="Stewart A."/>
            <person name="Sgouros J.G."/>
            <person name="Peat N."/>
            <person name="Hayles J."/>
            <person name="Baker S.G."/>
            <person name="Basham D."/>
            <person name="Bowman S."/>
            <person name="Brooks K."/>
            <person name="Brown D."/>
            <person name="Brown S."/>
            <person name="Chillingworth T."/>
            <person name="Churcher C.M."/>
            <person name="Collins M."/>
            <person name="Connor R."/>
            <person name="Cronin A."/>
            <person name="Davis P."/>
            <person name="Feltwell T."/>
            <person name="Fraser A."/>
            <person name="Gentles S."/>
            <person name="Goble A."/>
            <person name="Hamlin N."/>
            <person name="Harris D.E."/>
            <person name="Hidalgo J."/>
            <person name="Hodgson G."/>
            <person name="Holroyd S."/>
            <person name="Hornsby T."/>
            <person name="Howarth S."/>
            <person name="Huckle E.J."/>
            <person name="Hunt S."/>
            <person name="Jagels K."/>
            <person name="James K.D."/>
            <person name="Jones L."/>
            <person name="Jones M."/>
            <person name="Leather S."/>
            <person name="McDonald S."/>
            <person name="McLean J."/>
            <person name="Mooney P."/>
            <person name="Moule S."/>
            <person name="Mungall K.L."/>
            <person name="Murphy L.D."/>
            <person name="Niblett D."/>
            <person name="Odell C."/>
            <person name="Oliver K."/>
            <person name="O'Neil S."/>
            <person name="Pearson D."/>
            <person name="Quail M.A."/>
            <person name="Rabbinowitsch E."/>
            <person name="Rutherford K.M."/>
            <person name="Rutter S."/>
            <person name="Saunders D."/>
            <person name="Seeger K."/>
            <person name="Sharp S."/>
            <person name="Skelton J."/>
            <person name="Simmonds M.N."/>
            <person name="Squares R."/>
            <person name="Squares S."/>
            <person name="Stevens K."/>
            <person name="Taylor K."/>
            <person name="Taylor R.G."/>
            <person name="Tivey A."/>
            <person name="Walsh S.V."/>
            <person name="Warren T."/>
            <person name="Whitehead S."/>
            <person name="Woodward J.R."/>
            <person name="Volckaert G."/>
            <person name="Aert R."/>
            <person name="Robben J."/>
            <person name="Grymonprez B."/>
            <person name="Weltjens I."/>
            <person name="Vanstreels E."/>
            <person name="Rieger M."/>
            <person name="Schaefer M."/>
            <person name="Mueller-Auer S."/>
            <person name="Gabel C."/>
            <person name="Fuchs M."/>
            <person name="Duesterhoeft A."/>
            <person name="Fritzc C."/>
            <person name="Holzer E."/>
            <person name="Moestl D."/>
            <person name="Hilbert H."/>
            <person name="Borzym K."/>
            <person name="Langer I."/>
            <person name="Beck A."/>
            <person name="Lehrach H."/>
            <person name="Reinhardt R."/>
            <person name="Pohl T.M."/>
            <person name="Eger P."/>
            <person name="Zimmermann W."/>
            <person name="Wedler H."/>
            <person name="Wambutt R."/>
            <person name="Purnelle B."/>
            <person name="Goffeau A."/>
            <person name="Cadieu E."/>
            <person name="Dreano S."/>
            <person name="Gloux S."/>
            <person name="Lelaure V."/>
            <person name="Mottier S."/>
            <person name="Galibert F."/>
            <person name="Aves S.J."/>
            <person name="Xiang Z."/>
            <person name="Hunt C."/>
            <person name="Moore K."/>
            <person name="Hurst S.M."/>
            <person name="Lucas M."/>
            <person name="Rochet M."/>
            <person name="Gaillardin C."/>
            <person name="Tallada V.A."/>
            <person name="Garzon A."/>
            <person name="Thode G."/>
            <person name="Daga R.R."/>
            <person name="Cruzado L."/>
            <person name="Jimenez J."/>
            <person name="Sanchez M."/>
            <person name="del Rey F."/>
            <person name="Benito J."/>
            <person name="Dominguez A."/>
            <person name="Revuelta J.L."/>
            <person name="Moreno S."/>
            <person name="Armstrong J."/>
            <person name="Forsburg S.L."/>
            <person name="Cerutti L."/>
            <person name="Lowe T."/>
            <person name="McCombie W.R."/>
            <person name="Paulsen I."/>
            <person name="Potashkin J."/>
            <person name="Shpakovski G.V."/>
            <person name="Ussery D."/>
            <person name="Barrell B.G."/>
            <person name="Nurse P."/>
        </authorList>
    </citation>
    <scope>NUCLEOTIDE SEQUENCE [LARGE SCALE GENOMIC DNA]</scope>
    <source>
        <strain>972 / ATCC 24843</strain>
    </source>
</reference>
<reference key="3">
    <citation type="journal article" date="2005" name="Curr. Biol.">
        <title>A large-scale screen in S. pombe identifies seven novel genes required for critical meiotic events.</title>
        <authorList>
            <person name="Martin-Castellanos C."/>
            <person name="Blanco M."/>
            <person name="Rozalen A.E."/>
            <person name="Perez-Hidalgo L."/>
            <person name="Garcia A.I."/>
            <person name="Conde F."/>
            <person name="Mata J."/>
            <person name="Ellermeier C."/>
            <person name="Davis L."/>
            <person name="San-Segundo P."/>
            <person name="Smith G.R."/>
            <person name="Moreno S."/>
        </authorList>
    </citation>
    <scope>FUNCTION IN MEIOSIS</scope>
</reference>
<reference key="4">
    <citation type="journal article" date="2006" name="Nat. Biotechnol.">
        <title>ORFeome cloning and global analysis of protein localization in the fission yeast Schizosaccharomyces pombe.</title>
        <authorList>
            <person name="Matsuyama A."/>
            <person name="Arai R."/>
            <person name="Yashiroda Y."/>
            <person name="Shirai A."/>
            <person name="Kamata A."/>
            <person name="Sekido S."/>
            <person name="Kobayashi Y."/>
            <person name="Hashimoto A."/>
            <person name="Hamamoto M."/>
            <person name="Hiraoka Y."/>
            <person name="Horinouchi S."/>
            <person name="Yoshida M."/>
        </authorList>
    </citation>
    <scope>SUBCELLULAR LOCATION [LARGE SCALE ANALYSIS]</scope>
</reference>
<name>MCP7_SCHPO</name>
<proteinExistence type="evidence at protein level"/>
<keyword id="KW-0175">Coiled coil</keyword>
<keyword id="KW-0963">Cytoplasm</keyword>
<keyword id="KW-0469">Meiosis</keyword>
<keyword id="KW-0539">Nucleus</keyword>
<keyword id="KW-1185">Reference proteome</keyword>
<gene>
    <name type="primary">mcp7</name>
    <name type="synonym">mug32</name>
    <name type="ORF">SPAC13A11.03</name>
</gene>
<comment type="function">
    <text evidence="2 3">Required for meiotic recombination.</text>
</comment>
<comment type="subunit">
    <text evidence="2">Interacts with meu13.</text>
</comment>
<comment type="subcellular location">
    <subcellularLocation>
        <location evidence="4">Cytoplasm</location>
    </subcellularLocation>
    <subcellularLocation>
        <location evidence="4">Nucleus</location>
    </subcellularLocation>
</comment>
<comment type="similarity">
    <text evidence="5">Belongs to the MND1 family.</text>
</comment>
<organism>
    <name type="scientific">Schizosaccharomyces pombe (strain 972 / ATCC 24843)</name>
    <name type="common">Fission yeast</name>
    <dbReference type="NCBI Taxonomy" id="284812"/>
    <lineage>
        <taxon>Eukaryota</taxon>
        <taxon>Fungi</taxon>
        <taxon>Dikarya</taxon>
        <taxon>Ascomycota</taxon>
        <taxon>Taphrinomycotina</taxon>
        <taxon>Schizosaccharomycetes</taxon>
        <taxon>Schizosaccharomycetales</taxon>
        <taxon>Schizosaccharomycetaceae</taxon>
        <taxon>Schizosaccharomyces</taxon>
    </lineage>
</organism>
<sequence>MPPKGLSLAEKRRRLEAIFHDSKDFFQLKEVEKLGSKKQIVLQTVKDVLQSLVDDNIVKTEKIGTSNYYWSFPSDAKRSRESVLGSLQAQLDDLKQKSKTLDENISFEKSKRDNEGTENDANQYTLELLHAKESELKLLKTQLSNLNHCNPETFELKNENTKKYMEAANLWTDQIHTLIAFCRDMGADTNQIREYCSIPEDLDDLQLPIL</sequence>
<dbReference type="EMBL" id="AB189985">
    <property type="protein sequence ID" value="BAD42847.1"/>
    <property type="molecule type" value="Genomic_DNA"/>
</dbReference>
<dbReference type="EMBL" id="CU329670">
    <property type="protein sequence ID" value="CAA90804.1"/>
    <property type="molecule type" value="Genomic_DNA"/>
</dbReference>
<dbReference type="PIR" id="T37610">
    <property type="entry name" value="T37610"/>
</dbReference>
<dbReference type="RefSeq" id="NP_592991.1">
    <property type="nucleotide sequence ID" value="NM_001018390.2"/>
</dbReference>
<dbReference type="SMR" id="Q09739"/>
<dbReference type="BioGRID" id="279005">
    <property type="interactions" value="8"/>
</dbReference>
<dbReference type="FunCoup" id="Q09739">
    <property type="interactions" value="87"/>
</dbReference>
<dbReference type="STRING" id="284812.Q09739"/>
<dbReference type="PaxDb" id="4896-SPAC13A11.03.1"/>
<dbReference type="EnsemblFungi" id="SPAC13A11.03.1">
    <property type="protein sequence ID" value="SPAC13A11.03.1:pep"/>
    <property type="gene ID" value="SPAC13A11.03"/>
</dbReference>
<dbReference type="GeneID" id="2542548"/>
<dbReference type="KEGG" id="spo:2542548"/>
<dbReference type="PomBase" id="SPAC13A11.03">
    <property type="gene designation" value="mcp7"/>
</dbReference>
<dbReference type="VEuPathDB" id="FungiDB:SPAC13A11.03"/>
<dbReference type="eggNOG" id="KOG3433">
    <property type="taxonomic scope" value="Eukaryota"/>
</dbReference>
<dbReference type="HOGENOM" id="CLU_080628_3_1_1"/>
<dbReference type="InParanoid" id="Q09739"/>
<dbReference type="OMA" id="VCYWAFP"/>
<dbReference type="PhylomeDB" id="Q09739"/>
<dbReference type="PRO" id="PR:Q09739"/>
<dbReference type="Proteomes" id="UP000002485">
    <property type="component" value="Chromosome I"/>
</dbReference>
<dbReference type="GO" id="GO:0000785">
    <property type="term" value="C:chromatin"/>
    <property type="evidence" value="ECO:0000314"/>
    <property type="project" value="PomBase"/>
</dbReference>
<dbReference type="GO" id="GO:0005829">
    <property type="term" value="C:cytosol"/>
    <property type="evidence" value="ECO:0007005"/>
    <property type="project" value="PomBase"/>
</dbReference>
<dbReference type="GO" id="GO:0120231">
    <property type="term" value="C:DNA recombinase auxiliary factor complex"/>
    <property type="evidence" value="ECO:0000353"/>
    <property type="project" value="PomBase"/>
</dbReference>
<dbReference type="GO" id="GO:0005634">
    <property type="term" value="C:nucleus"/>
    <property type="evidence" value="ECO:0007005"/>
    <property type="project" value="PomBase"/>
</dbReference>
<dbReference type="GO" id="GO:0003690">
    <property type="term" value="F:double-stranded DNA binding"/>
    <property type="evidence" value="ECO:0007669"/>
    <property type="project" value="InterPro"/>
</dbReference>
<dbReference type="GO" id="GO:0120230">
    <property type="term" value="F:recombinase activator activity"/>
    <property type="evidence" value="ECO:0000314"/>
    <property type="project" value="PomBase"/>
</dbReference>
<dbReference type="GO" id="GO:0000709">
    <property type="term" value="P:meiotic joint molecule formation"/>
    <property type="evidence" value="ECO:0000314"/>
    <property type="project" value="PomBase"/>
</dbReference>
<dbReference type="GO" id="GO:0010774">
    <property type="term" value="P:meiotic strand invasion involved in reciprocal meiotic recombination"/>
    <property type="evidence" value="ECO:0000314"/>
    <property type="project" value="PomBase"/>
</dbReference>
<dbReference type="GO" id="GO:0007131">
    <property type="term" value="P:reciprocal meiotic recombination"/>
    <property type="evidence" value="ECO:0000318"/>
    <property type="project" value="GO_Central"/>
</dbReference>
<dbReference type="InterPro" id="IPR040661">
    <property type="entry name" value="LZ3wCH"/>
</dbReference>
<dbReference type="InterPro" id="IPR005647">
    <property type="entry name" value="Mnd1"/>
</dbReference>
<dbReference type="InterPro" id="IPR040453">
    <property type="entry name" value="Mnd1_HTH"/>
</dbReference>
<dbReference type="Pfam" id="PF18517">
    <property type="entry name" value="LZ3wCH"/>
    <property type="match status" value="1"/>
</dbReference>
<dbReference type="Pfam" id="PF03962">
    <property type="entry name" value="Mnd1"/>
    <property type="match status" value="1"/>
</dbReference>
<dbReference type="PIRSF" id="PIRSF026991">
    <property type="entry name" value="Mnd1"/>
    <property type="match status" value="1"/>
</dbReference>
<protein>
    <recommendedName>
        <fullName>Meiotic coiled-coil protein 7</fullName>
    </recommendedName>
    <alternativeName>
        <fullName>Meiotically up-regulated gene 32 protein</fullName>
    </alternativeName>
</protein>
<feature type="chain" id="PRO_0000096293" description="Meiotic coiled-coil protein 7">
    <location>
        <begin position="1"/>
        <end position="210"/>
    </location>
</feature>
<feature type="coiled-coil region" evidence="1">
    <location>
        <begin position="77"/>
        <end position="148"/>
    </location>
</feature>
<evidence type="ECO:0000255" key="1"/>
<evidence type="ECO:0000269" key="2">
    <source>
    </source>
</evidence>
<evidence type="ECO:0000269" key="3">
    <source>
    </source>
</evidence>
<evidence type="ECO:0000269" key="4">
    <source>
    </source>
</evidence>
<evidence type="ECO:0000305" key="5"/>